<gene>
    <name type="primary">ugpA</name>
    <name type="ordered locus">STY4255</name>
    <name type="ordered locus">t3965</name>
</gene>
<dbReference type="EMBL" id="AE014613">
    <property type="protein sequence ID" value="AAO71435.1"/>
    <property type="molecule type" value="Genomic_DNA"/>
</dbReference>
<dbReference type="EMBL" id="AL513382">
    <property type="protein sequence ID" value="CAD08073.1"/>
    <property type="molecule type" value="Genomic_DNA"/>
</dbReference>
<dbReference type="RefSeq" id="NP_458363.1">
    <property type="nucleotide sequence ID" value="NC_003198.1"/>
</dbReference>
<dbReference type="RefSeq" id="WP_000099302.1">
    <property type="nucleotide sequence ID" value="NZ_WSUR01000001.1"/>
</dbReference>
<dbReference type="SMR" id="Q8Z247"/>
<dbReference type="STRING" id="220341.gene:17588086"/>
<dbReference type="KEGG" id="stt:t3965"/>
<dbReference type="KEGG" id="sty:STY4255"/>
<dbReference type="PATRIC" id="fig|220341.7.peg.4346"/>
<dbReference type="eggNOG" id="COG1175">
    <property type="taxonomic scope" value="Bacteria"/>
</dbReference>
<dbReference type="HOGENOM" id="CLU_016047_0_2_6"/>
<dbReference type="OMA" id="LWYSVQS"/>
<dbReference type="OrthoDB" id="9785347at2"/>
<dbReference type="Proteomes" id="UP000000541">
    <property type="component" value="Chromosome"/>
</dbReference>
<dbReference type="Proteomes" id="UP000002670">
    <property type="component" value="Chromosome"/>
</dbReference>
<dbReference type="GO" id="GO:0005886">
    <property type="term" value="C:plasma membrane"/>
    <property type="evidence" value="ECO:0007669"/>
    <property type="project" value="UniProtKB-SubCell"/>
</dbReference>
<dbReference type="GO" id="GO:0055085">
    <property type="term" value="P:transmembrane transport"/>
    <property type="evidence" value="ECO:0007669"/>
    <property type="project" value="InterPro"/>
</dbReference>
<dbReference type="CDD" id="cd06261">
    <property type="entry name" value="TM_PBP2"/>
    <property type="match status" value="1"/>
</dbReference>
<dbReference type="FunFam" id="1.10.3720.10:FF:000028">
    <property type="entry name" value="sn-glycerol-3-phosphate ABC transporter permease UgpA"/>
    <property type="match status" value="1"/>
</dbReference>
<dbReference type="Gene3D" id="1.10.3720.10">
    <property type="entry name" value="MetI-like"/>
    <property type="match status" value="1"/>
</dbReference>
<dbReference type="InterPro" id="IPR000515">
    <property type="entry name" value="MetI-like"/>
</dbReference>
<dbReference type="InterPro" id="IPR035906">
    <property type="entry name" value="MetI-like_sf"/>
</dbReference>
<dbReference type="InterPro" id="IPR050809">
    <property type="entry name" value="UgpAE/MalFG_permease"/>
</dbReference>
<dbReference type="NCBIfam" id="NF007852">
    <property type="entry name" value="PRK10561.1"/>
    <property type="match status" value="1"/>
</dbReference>
<dbReference type="PANTHER" id="PTHR43227">
    <property type="entry name" value="BLL4140 PROTEIN"/>
    <property type="match status" value="1"/>
</dbReference>
<dbReference type="PANTHER" id="PTHR43227:SF9">
    <property type="entry name" value="SN-GLYCEROL-3-PHOSPHATE TRANSPORT SYSTEM PERMEASE PROTEIN UGPA"/>
    <property type="match status" value="1"/>
</dbReference>
<dbReference type="Pfam" id="PF00528">
    <property type="entry name" value="BPD_transp_1"/>
    <property type="match status" value="1"/>
</dbReference>
<dbReference type="SUPFAM" id="SSF161098">
    <property type="entry name" value="MetI-like"/>
    <property type="match status" value="1"/>
</dbReference>
<dbReference type="PROSITE" id="PS50928">
    <property type="entry name" value="ABC_TM1"/>
    <property type="match status" value="1"/>
</dbReference>
<feature type="chain" id="PRO_0000292829" description="sn-glycerol-3-phosphate transport system permease protein UgpA">
    <location>
        <begin position="1"/>
        <end position="295"/>
    </location>
</feature>
<feature type="topological domain" description="Cytoplasmic" evidence="2">
    <location>
        <begin position="1"/>
        <end position="11"/>
    </location>
</feature>
<feature type="transmembrane region" description="Helical" evidence="3">
    <location>
        <begin position="12"/>
        <end position="32"/>
    </location>
</feature>
<feature type="topological domain" description="Periplasmic" evidence="2">
    <location>
        <begin position="33"/>
        <end position="80"/>
    </location>
</feature>
<feature type="transmembrane region" description="Helical" evidence="3">
    <location>
        <begin position="81"/>
        <end position="101"/>
    </location>
</feature>
<feature type="topological domain" description="Cytoplasmic" evidence="2">
    <location>
        <begin position="102"/>
        <end position="109"/>
    </location>
</feature>
<feature type="transmembrane region" description="Helical" evidence="3">
    <location>
        <begin position="110"/>
        <end position="130"/>
    </location>
</feature>
<feature type="topological domain" description="Periplasmic" evidence="2">
    <location>
        <begin position="131"/>
        <end position="157"/>
    </location>
</feature>
<feature type="transmembrane region" description="Helical" evidence="3">
    <location>
        <begin position="158"/>
        <end position="178"/>
    </location>
</feature>
<feature type="topological domain" description="Cytoplasmic" evidence="2">
    <location>
        <begin position="179"/>
        <end position="207"/>
    </location>
</feature>
<feature type="transmembrane region" description="Helical" evidence="3">
    <location>
        <begin position="208"/>
        <end position="228"/>
    </location>
</feature>
<feature type="topological domain" description="Periplasmic" evidence="2">
    <location>
        <begin position="229"/>
        <end position="262"/>
    </location>
</feature>
<feature type="transmembrane region" description="Helical" evidence="3">
    <location>
        <begin position="263"/>
        <end position="283"/>
    </location>
</feature>
<feature type="topological domain" description="Cytoplasmic" evidence="2">
    <location>
        <begin position="284"/>
        <end position="295"/>
    </location>
</feature>
<feature type="domain" description="ABC transmembrane type-1" evidence="3">
    <location>
        <begin position="76"/>
        <end position="284"/>
    </location>
</feature>
<protein>
    <recommendedName>
        <fullName evidence="1">sn-glycerol-3-phosphate transport system permease protein UgpA</fullName>
    </recommendedName>
</protein>
<keyword id="KW-0997">Cell inner membrane</keyword>
<keyword id="KW-1003">Cell membrane</keyword>
<keyword id="KW-0472">Membrane</keyword>
<keyword id="KW-0812">Transmembrane</keyword>
<keyword id="KW-1133">Transmembrane helix</keyword>
<keyword id="KW-0813">Transport</keyword>
<evidence type="ECO:0000250" key="1">
    <source>
        <dbReference type="UniProtKB" id="P10905"/>
    </source>
</evidence>
<evidence type="ECO:0000255" key="2"/>
<evidence type="ECO:0000255" key="3">
    <source>
        <dbReference type="PROSITE-ProRule" id="PRU00441"/>
    </source>
</evidence>
<evidence type="ECO:0000305" key="4"/>
<sequence>MSSSRPVFRSRWLPYLLVAPQLVITVIFFIWPAGEALWYSLQSVDPFGFSSQFVGLENFVALFHDSYYLDAFWTTIKFSALVTFSGLLVSLFFAALVDYVVRGSRFYQTLMLLPYAVAPAVAAVLWIFLFNPGRGLITHFLGEFGYDWNHAQNSGQAMFLVVFASVWKQISYNFLFFFAALQSIPRSLVEAAAIDGAGPIRRFFRLSLPLIAPVSFFLLVVNLVYAFFDTFPVIDAATAGGPVQATTTLIYKIYCEGFTGLDLSASAAQSVVLMFLVIILTVVQFRYVESKVRYQ</sequence>
<accession>Q8Z247</accession>
<accession>Q7C5Y0</accession>
<organism>
    <name type="scientific">Salmonella typhi</name>
    <dbReference type="NCBI Taxonomy" id="90370"/>
    <lineage>
        <taxon>Bacteria</taxon>
        <taxon>Pseudomonadati</taxon>
        <taxon>Pseudomonadota</taxon>
        <taxon>Gammaproteobacteria</taxon>
        <taxon>Enterobacterales</taxon>
        <taxon>Enterobacteriaceae</taxon>
        <taxon>Salmonella</taxon>
    </lineage>
</organism>
<comment type="function">
    <text evidence="1">Part of the ABC transporter complex UgpBAEC involved in sn-glycerol-3-phosphate (G3P) import. Probably responsible for the translocation of the substrate across the membrane.</text>
</comment>
<comment type="subunit">
    <text evidence="1">The complex is composed of two ATP-binding proteins (UgpC), two transmembrane proteins (UgpA and UgpE) and a solute-binding protein (UgpB).</text>
</comment>
<comment type="subcellular location">
    <subcellularLocation>
        <location evidence="1">Cell inner membrane</location>
        <topology evidence="2">Multi-pass membrane protein</topology>
    </subcellularLocation>
</comment>
<comment type="similarity">
    <text evidence="4">Belongs to the binding-protein-dependent transport system permease family. UgpAE subfamily.</text>
</comment>
<reference key="1">
    <citation type="journal article" date="2001" name="Nature">
        <title>Complete genome sequence of a multiple drug resistant Salmonella enterica serovar Typhi CT18.</title>
        <authorList>
            <person name="Parkhill J."/>
            <person name="Dougan G."/>
            <person name="James K.D."/>
            <person name="Thomson N.R."/>
            <person name="Pickard D."/>
            <person name="Wain J."/>
            <person name="Churcher C.M."/>
            <person name="Mungall K.L."/>
            <person name="Bentley S.D."/>
            <person name="Holden M.T.G."/>
            <person name="Sebaihia M."/>
            <person name="Baker S."/>
            <person name="Basham D."/>
            <person name="Brooks K."/>
            <person name="Chillingworth T."/>
            <person name="Connerton P."/>
            <person name="Cronin A."/>
            <person name="Davis P."/>
            <person name="Davies R.M."/>
            <person name="Dowd L."/>
            <person name="White N."/>
            <person name="Farrar J."/>
            <person name="Feltwell T."/>
            <person name="Hamlin N."/>
            <person name="Haque A."/>
            <person name="Hien T.T."/>
            <person name="Holroyd S."/>
            <person name="Jagels K."/>
            <person name="Krogh A."/>
            <person name="Larsen T.S."/>
            <person name="Leather S."/>
            <person name="Moule S."/>
            <person name="O'Gaora P."/>
            <person name="Parry C."/>
            <person name="Quail M.A."/>
            <person name="Rutherford K.M."/>
            <person name="Simmonds M."/>
            <person name="Skelton J."/>
            <person name="Stevens K."/>
            <person name="Whitehead S."/>
            <person name="Barrell B.G."/>
        </authorList>
    </citation>
    <scope>NUCLEOTIDE SEQUENCE [LARGE SCALE GENOMIC DNA]</scope>
    <source>
        <strain>CT18</strain>
    </source>
</reference>
<reference key="2">
    <citation type="journal article" date="2003" name="J. Bacteriol.">
        <title>Comparative genomics of Salmonella enterica serovar Typhi strains Ty2 and CT18.</title>
        <authorList>
            <person name="Deng W."/>
            <person name="Liou S.-R."/>
            <person name="Plunkett G. III"/>
            <person name="Mayhew G.F."/>
            <person name="Rose D.J."/>
            <person name="Burland V."/>
            <person name="Kodoyianni V."/>
            <person name="Schwartz D.C."/>
            <person name="Blattner F.R."/>
        </authorList>
    </citation>
    <scope>NUCLEOTIDE SEQUENCE [LARGE SCALE GENOMIC DNA]</scope>
    <source>
        <strain>ATCC 700931 / Ty2</strain>
    </source>
</reference>
<proteinExistence type="inferred from homology"/>
<name>UGPA_SALTI</name>